<evidence type="ECO:0000255" key="1">
    <source>
        <dbReference type="HAMAP-Rule" id="MF_01576"/>
    </source>
</evidence>
<protein>
    <recommendedName>
        <fullName evidence="1">Bifunctional protein FolD</fullName>
    </recommendedName>
    <domain>
        <recommendedName>
            <fullName evidence="1">Methylenetetrahydrofolate dehydrogenase</fullName>
            <ecNumber evidence="1">1.5.1.5</ecNumber>
        </recommendedName>
    </domain>
    <domain>
        <recommendedName>
            <fullName evidence="1">Methenyltetrahydrofolate cyclohydrolase</fullName>
            <ecNumber evidence="1">3.5.4.9</ecNumber>
        </recommendedName>
    </domain>
</protein>
<organism>
    <name type="scientific">Pelobacter propionicus (strain DSM 2379 / NBRC 103807 / OttBd1)</name>
    <dbReference type="NCBI Taxonomy" id="338966"/>
    <lineage>
        <taxon>Bacteria</taxon>
        <taxon>Pseudomonadati</taxon>
        <taxon>Thermodesulfobacteriota</taxon>
        <taxon>Desulfuromonadia</taxon>
        <taxon>Desulfuromonadales</taxon>
        <taxon>Desulfuromonadaceae</taxon>
        <taxon>Pelobacter</taxon>
    </lineage>
</organism>
<feature type="chain" id="PRO_0000305859" description="Bifunctional protein FolD">
    <location>
        <begin position="1"/>
        <end position="283"/>
    </location>
</feature>
<feature type="binding site" evidence="1">
    <location>
        <begin position="164"/>
        <end position="166"/>
    </location>
    <ligand>
        <name>NADP(+)</name>
        <dbReference type="ChEBI" id="CHEBI:58349"/>
    </ligand>
</feature>
<feature type="binding site" evidence="1">
    <location>
        <position position="189"/>
    </location>
    <ligand>
        <name>NADP(+)</name>
        <dbReference type="ChEBI" id="CHEBI:58349"/>
    </ligand>
</feature>
<feature type="binding site" evidence="1">
    <location>
        <position position="230"/>
    </location>
    <ligand>
        <name>NADP(+)</name>
        <dbReference type="ChEBI" id="CHEBI:58349"/>
    </ligand>
</feature>
<reference key="1">
    <citation type="submission" date="2006-10" db="EMBL/GenBank/DDBJ databases">
        <title>Complete sequence of chromosome of Pelobacter propionicus DSM 2379.</title>
        <authorList>
            <consortium name="US DOE Joint Genome Institute"/>
            <person name="Copeland A."/>
            <person name="Lucas S."/>
            <person name="Lapidus A."/>
            <person name="Barry K."/>
            <person name="Detter J.C."/>
            <person name="Glavina del Rio T."/>
            <person name="Hammon N."/>
            <person name="Israni S."/>
            <person name="Dalin E."/>
            <person name="Tice H."/>
            <person name="Pitluck S."/>
            <person name="Saunders E."/>
            <person name="Brettin T."/>
            <person name="Bruce D."/>
            <person name="Han C."/>
            <person name="Tapia R."/>
            <person name="Schmutz J."/>
            <person name="Larimer F."/>
            <person name="Land M."/>
            <person name="Hauser L."/>
            <person name="Kyrpides N."/>
            <person name="Kim E."/>
            <person name="Lovley D."/>
            <person name="Richardson P."/>
        </authorList>
    </citation>
    <scope>NUCLEOTIDE SEQUENCE [LARGE SCALE GENOMIC DNA]</scope>
    <source>
        <strain>DSM 2379 / NBRC 103807 / OttBd1</strain>
    </source>
</reference>
<name>FOLD_PELPD</name>
<dbReference type="EC" id="1.5.1.5" evidence="1"/>
<dbReference type="EC" id="3.5.4.9" evidence="1"/>
<dbReference type="EMBL" id="CP000482">
    <property type="protein sequence ID" value="ABK98111.1"/>
    <property type="molecule type" value="Genomic_DNA"/>
</dbReference>
<dbReference type="RefSeq" id="WP_011734425.1">
    <property type="nucleotide sequence ID" value="NC_008609.1"/>
</dbReference>
<dbReference type="SMR" id="A1AL91"/>
<dbReference type="STRING" id="338966.Ppro_0480"/>
<dbReference type="KEGG" id="ppd:Ppro_0480"/>
<dbReference type="eggNOG" id="COG0190">
    <property type="taxonomic scope" value="Bacteria"/>
</dbReference>
<dbReference type="HOGENOM" id="CLU_034045_2_1_7"/>
<dbReference type="OrthoDB" id="9803580at2"/>
<dbReference type="UniPathway" id="UPA00193"/>
<dbReference type="Proteomes" id="UP000006732">
    <property type="component" value="Chromosome"/>
</dbReference>
<dbReference type="GO" id="GO:0005829">
    <property type="term" value="C:cytosol"/>
    <property type="evidence" value="ECO:0007669"/>
    <property type="project" value="TreeGrafter"/>
</dbReference>
<dbReference type="GO" id="GO:0004477">
    <property type="term" value="F:methenyltetrahydrofolate cyclohydrolase activity"/>
    <property type="evidence" value="ECO:0007669"/>
    <property type="project" value="UniProtKB-UniRule"/>
</dbReference>
<dbReference type="GO" id="GO:0004488">
    <property type="term" value="F:methylenetetrahydrofolate dehydrogenase (NADP+) activity"/>
    <property type="evidence" value="ECO:0007669"/>
    <property type="project" value="UniProtKB-UniRule"/>
</dbReference>
<dbReference type="GO" id="GO:0000105">
    <property type="term" value="P:L-histidine biosynthetic process"/>
    <property type="evidence" value="ECO:0007669"/>
    <property type="project" value="UniProtKB-KW"/>
</dbReference>
<dbReference type="GO" id="GO:0009086">
    <property type="term" value="P:methionine biosynthetic process"/>
    <property type="evidence" value="ECO:0007669"/>
    <property type="project" value="UniProtKB-KW"/>
</dbReference>
<dbReference type="GO" id="GO:0006164">
    <property type="term" value="P:purine nucleotide biosynthetic process"/>
    <property type="evidence" value="ECO:0007669"/>
    <property type="project" value="UniProtKB-KW"/>
</dbReference>
<dbReference type="GO" id="GO:0035999">
    <property type="term" value="P:tetrahydrofolate interconversion"/>
    <property type="evidence" value="ECO:0007669"/>
    <property type="project" value="UniProtKB-UniRule"/>
</dbReference>
<dbReference type="CDD" id="cd01080">
    <property type="entry name" value="NAD_bind_m-THF_DH_Cyclohyd"/>
    <property type="match status" value="1"/>
</dbReference>
<dbReference type="FunFam" id="3.40.50.10860:FF:000001">
    <property type="entry name" value="Bifunctional protein FolD"/>
    <property type="match status" value="1"/>
</dbReference>
<dbReference type="FunFam" id="3.40.50.720:FF:000094">
    <property type="entry name" value="Bifunctional protein FolD"/>
    <property type="match status" value="1"/>
</dbReference>
<dbReference type="Gene3D" id="3.40.50.10860">
    <property type="entry name" value="Leucine Dehydrogenase, chain A, domain 1"/>
    <property type="match status" value="1"/>
</dbReference>
<dbReference type="Gene3D" id="3.40.50.720">
    <property type="entry name" value="NAD(P)-binding Rossmann-like Domain"/>
    <property type="match status" value="1"/>
</dbReference>
<dbReference type="HAMAP" id="MF_01576">
    <property type="entry name" value="THF_DHG_CYH"/>
    <property type="match status" value="1"/>
</dbReference>
<dbReference type="InterPro" id="IPR046346">
    <property type="entry name" value="Aminoacid_DH-like_N_sf"/>
</dbReference>
<dbReference type="InterPro" id="IPR036291">
    <property type="entry name" value="NAD(P)-bd_dom_sf"/>
</dbReference>
<dbReference type="InterPro" id="IPR000672">
    <property type="entry name" value="THF_DH/CycHdrlase"/>
</dbReference>
<dbReference type="InterPro" id="IPR020630">
    <property type="entry name" value="THF_DH/CycHdrlase_cat_dom"/>
</dbReference>
<dbReference type="InterPro" id="IPR020867">
    <property type="entry name" value="THF_DH/CycHdrlase_CS"/>
</dbReference>
<dbReference type="InterPro" id="IPR020631">
    <property type="entry name" value="THF_DH/CycHdrlase_NAD-bd_dom"/>
</dbReference>
<dbReference type="NCBIfam" id="NF008058">
    <property type="entry name" value="PRK10792.1"/>
    <property type="match status" value="1"/>
</dbReference>
<dbReference type="NCBIfam" id="NF010783">
    <property type="entry name" value="PRK14186.1"/>
    <property type="match status" value="1"/>
</dbReference>
<dbReference type="NCBIfam" id="NF010785">
    <property type="entry name" value="PRK14188.1"/>
    <property type="match status" value="1"/>
</dbReference>
<dbReference type="NCBIfam" id="NF010786">
    <property type="entry name" value="PRK14189.1"/>
    <property type="match status" value="1"/>
</dbReference>
<dbReference type="PANTHER" id="PTHR48099:SF5">
    <property type="entry name" value="C-1-TETRAHYDROFOLATE SYNTHASE, CYTOPLASMIC"/>
    <property type="match status" value="1"/>
</dbReference>
<dbReference type="PANTHER" id="PTHR48099">
    <property type="entry name" value="C-1-TETRAHYDROFOLATE SYNTHASE, CYTOPLASMIC-RELATED"/>
    <property type="match status" value="1"/>
</dbReference>
<dbReference type="Pfam" id="PF00763">
    <property type="entry name" value="THF_DHG_CYH"/>
    <property type="match status" value="1"/>
</dbReference>
<dbReference type="Pfam" id="PF02882">
    <property type="entry name" value="THF_DHG_CYH_C"/>
    <property type="match status" value="1"/>
</dbReference>
<dbReference type="PRINTS" id="PR00085">
    <property type="entry name" value="THFDHDRGNASE"/>
</dbReference>
<dbReference type="SUPFAM" id="SSF53223">
    <property type="entry name" value="Aminoacid dehydrogenase-like, N-terminal domain"/>
    <property type="match status" value="1"/>
</dbReference>
<dbReference type="SUPFAM" id="SSF51735">
    <property type="entry name" value="NAD(P)-binding Rossmann-fold domains"/>
    <property type="match status" value="1"/>
</dbReference>
<dbReference type="PROSITE" id="PS00766">
    <property type="entry name" value="THF_DHG_CYH_1"/>
    <property type="match status" value="1"/>
</dbReference>
<dbReference type="PROSITE" id="PS00767">
    <property type="entry name" value="THF_DHG_CYH_2"/>
    <property type="match status" value="1"/>
</dbReference>
<accession>A1AL91</accession>
<comment type="function">
    <text evidence="1">Catalyzes the oxidation of 5,10-methylenetetrahydrofolate to 5,10-methenyltetrahydrofolate and then the hydrolysis of 5,10-methenyltetrahydrofolate to 10-formyltetrahydrofolate.</text>
</comment>
<comment type="catalytic activity">
    <reaction evidence="1">
        <text>(6R)-5,10-methylene-5,6,7,8-tetrahydrofolate + NADP(+) = (6R)-5,10-methenyltetrahydrofolate + NADPH</text>
        <dbReference type="Rhea" id="RHEA:22812"/>
        <dbReference type="ChEBI" id="CHEBI:15636"/>
        <dbReference type="ChEBI" id="CHEBI:57455"/>
        <dbReference type="ChEBI" id="CHEBI:57783"/>
        <dbReference type="ChEBI" id="CHEBI:58349"/>
        <dbReference type="EC" id="1.5.1.5"/>
    </reaction>
</comment>
<comment type="catalytic activity">
    <reaction evidence="1">
        <text>(6R)-5,10-methenyltetrahydrofolate + H2O = (6R)-10-formyltetrahydrofolate + H(+)</text>
        <dbReference type="Rhea" id="RHEA:23700"/>
        <dbReference type="ChEBI" id="CHEBI:15377"/>
        <dbReference type="ChEBI" id="CHEBI:15378"/>
        <dbReference type="ChEBI" id="CHEBI:57455"/>
        <dbReference type="ChEBI" id="CHEBI:195366"/>
        <dbReference type="EC" id="3.5.4.9"/>
    </reaction>
</comment>
<comment type="pathway">
    <text evidence="1">One-carbon metabolism; tetrahydrofolate interconversion.</text>
</comment>
<comment type="subunit">
    <text evidence="1">Homodimer.</text>
</comment>
<comment type="similarity">
    <text evidence="1">Belongs to the tetrahydrofolate dehydrogenase/cyclohydrolase family.</text>
</comment>
<gene>
    <name evidence="1" type="primary">folD</name>
    <name type="ordered locus">Ppro_0480</name>
</gene>
<proteinExistence type="inferred from homology"/>
<sequence length="283" mass="30071">MAHIIDGKAIAAKIRSEIASGVRELQGKGVTPGLAVVLVGDDQASRVYVSMKEKACNDAGIFSVEHKLAAETSEAELLALVELLNNDPKIHGILVQLPLPSQIDTDKVLEAISPFKDVDGFHPYNVGRLSVGKPVFQPCTPYGVMVMLREAGVELKGKEVVVVGRSNIVGKPVAMMCLAEHATVTLCHSRTRDLPDVVRRADVVIAAVGRPEMIKGDWIKEGAVVIDVGINRVGEKKLVGDVEFAGASQRASAITPVPGGVGPMTITMLLQNTLESAKRGMAE</sequence>
<keyword id="KW-0028">Amino-acid biosynthesis</keyword>
<keyword id="KW-0368">Histidine biosynthesis</keyword>
<keyword id="KW-0378">Hydrolase</keyword>
<keyword id="KW-0486">Methionine biosynthesis</keyword>
<keyword id="KW-0511">Multifunctional enzyme</keyword>
<keyword id="KW-0521">NADP</keyword>
<keyword id="KW-0554">One-carbon metabolism</keyword>
<keyword id="KW-0560">Oxidoreductase</keyword>
<keyword id="KW-0658">Purine biosynthesis</keyword>
<keyword id="KW-1185">Reference proteome</keyword>